<evidence type="ECO:0000255" key="1">
    <source>
        <dbReference type="HAMAP-Rule" id="MF_00675"/>
    </source>
</evidence>
<name>UXAC_ECO27</name>
<proteinExistence type="inferred from homology"/>
<dbReference type="EC" id="5.3.1.12" evidence="1"/>
<dbReference type="EMBL" id="FM180568">
    <property type="protein sequence ID" value="CAS10933.1"/>
    <property type="molecule type" value="Genomic_DNA"/>
</dbReference>
<dbReference type="RefSeq" id="WP_000187442.1">
    <property type="nucleotide sequence ID" value="NC_011601.1"/>
</dbReference>
<dbReference type="SMR" id="B7UIZ9"/>
<dbReference type="GeneID" id="93778895"/>
<dbReference type="KEGG" id="ecg:E2348C_3385"/>
<dbReference type="HOGENOM" id="CLU_044465_1_0_6"/>
<dbReference type="UniPathway" id="UPA00246"/>
<dbReference type="Proteomes" id="UP000008205">
    <property type="component" value="Chromosome"/>
</dbReference>
<dbReference type="GO" id="GO:0008880">
    <property type="term" value="F:glucuronate isomerase activity"/>
    <property type="evidence" value="ECO:0007669"/>
    <property type="project" value="UniProtKB-UniRule"/>
</dbReference>
<dbReference type="GO" id="GO:0019698">
    <property type="term" value="P:D-galacturonate catabolic process"/>
    <property type="evidence" value="ECO:0007669"/>
    <property type="project" value="TreeGrafter"/>
</dbReference>
<dbReference type="GO" id="GO:0042840">
    <property type="term" value="P:D-glucuronate catabolic process"/>
    <property type="evidence" value="ECO:0007669"/>
    <property type="project" value="TreeGrafter"/>
</dbReference>
<dbReference type="FunFam" id="1.10.2020.10:FF:000001">
    <property type="entry name" value="Uronate isomerase"/>
    <property type="match status" value="1"/>
</dbReference>
<dbReference type="Gene3D" id="3.20.20.140">
    <property type="entry name" value="Metal-dependent hydrolases"/>
    <property type="match status" value="1"/>
</dbReference>
<dbReference type="Gene3D" id="1.10.2020.10">
    <property type="entry name" value="uronate isomerase, domain 2, chain A"/>
    <property type="match status" value="1"/>
</dbReference>
<dbReference type="HAMAP" id="MF_00675">
    <property type="entry name" value="UxaC"/>
    <property type="match status" value="1"/>
</dbReference>
<dbReference type="InterPro" id="IPR032466">
    <property type="entry name" value="Metal_Hydrolase"/>
</dbReference>
<dbReference type="InterPro" id="IPR003766">
    <property type="entry name" value="Uronate_isomerase"/>
</dbReference>
<dbReference type="NCBIfam" id="NF002794">
    <property type="entry name" value="PRK02925.1"/>
    <property type="match status" value="1"/>
</dbReference>
<dbReference type="PANTHER" id="PTHR30068">
    <property type="entry name" value="URONATE ISOMERASE"/>
    <property type="match status" value="1"/>
</dbReference>
<dbReference type="PANTHER" id="PTHR30068:SF4">
    <property type="entry name" value="URONATE ISOMERASE"/>
    <property type="match status" value="1"/>
</dbReference>
<dbReference type="Pfam" id="PF02614">
    <property type="entry name" value="UxaC"/>
    <property type="match status" value="1"/>
</dbReference>
<dbReference type="SUPFAM" id="SSF51556">
    <property type="entry name" value="Metallo-dependent hydrolases"/>
    <property type="match status" value="1"/>
</dbReference>
<comment type="catalytic activity">
    <reaction evidence="1">
        <text>D-glucuronate = D-fructuronate</text>
        <dbReference type="Rhea" id="RHEA:13049"/>
        <dbReference type="ChEBI" id="CHEBI:58720"/>
        <dbReference type="ChEBI" id="CHEBI:59863"/>
        <dbReference type="EC" id="5.3.1.12"/>
    </reaction>
</comment>
<comment type="catalytic activity">
    <reaction evidence="1">
        <text>aldehydo-D-galacturonate = keto-D-tagaturonate</text>
        <dbReference type="Rhea" id="RHEA:27702"/>
        <dbReference type="ChEBI" id="CHEBI:12952"/>
        <dbReference type="ChEBI" id="CHEBI:17886"/>
        <dbReference type="EC" id="5.3.1.12"/>
    </reaction>
</comment>
<comment type="pathway">
    <text evidence="1">Carbohydrate metabolism; pentose and glucuronate interconversion.</text>
</comment>
<comment type="similarity">
    <text evidence="1">Belongs to the metallo-dependent hydrolases superfamily. Uronate isomerase family.</text>
</comment>
<reference key="1">
    <citation type="journal article" date="2009" name="J. Bacteriol.">
        <title>Complete genome sequence and comparative genome analysis of enteropathogenic Escherichia coli O127:H6 strain E2348/69.</title>
        <authorList>
            <person name="Iguchi A."/>
            <person name="Thomson N.R."/>
            <person name="Ogura Y."/>
            <person name="Saunders D."/>
            <person name="Ooka T."/>
            <person name="Henderson I.R."/>
            <person name="Harris D."/>
            <person name="Asadulghani M."/>
            <person name="Kurokawa K."/>
            <person name="Dean P."/>
            <person name="Kenny B."/>
            <person name="Quail M.A."/>
            <person name="Thurston S."/>
            <person name="Dougan G."/>
            <person name="Hayashi T."/>
            <person name="Parkhill J."/>
            <person name="Frankel G."/>
        </authorList>
    </citation>
    <scope>NUCLEOTIDE SEQUENCE [LARGE SCALE GENOMIC DNA]</scope>
    <source>
        <strain>E2348/69 / EPEC</strain>
    </source>
</reference>
<sequence>MTPFMTEDFLLDTEFARRLYHDYAKDQPIFDYHCHLPPQQIAEDYRFKNLYDIWLKGDHYKWRAMRTNGVAERLCTGDASDREKFDAWAATVPHTIGNPLYHWTHLELRRPFGITGKLLSPSTADEIWNECNELLAQDNFSARGIMQQMNVKMVGTTDDPIDSLEHHAEIAKDGSFTIKVLPSWRPDKAFNIEQATFNDYMAKLGEVSDTDIRRFADLQTALTKRLDHFAAHGCKVSDHALDVVMFAEANEAELDSILARRLAGETLSEHEVAQFKTAVLVFLGAEYARRGWVQQYHIGALRNNNLRQFKLLGPDVGFDSINDRPMAEELSKLLSKQNEENLLPKTILYCLNPRDNEVLGTMIGNFQGEGMPGKMQFGSGWWFNDQKDGMERQMTQLAQLGLLSRFVGMLTDSRSFLSYTRHEYFRRILCQMIGRWVEAGEAPADINLLGEMVKNICFNNARDYFAIELN</sequence>
<gene>
    <name evidence="1" type="primary">uxaC</name>
    <name type="ordered locus">E2348C_3385</name>
</gene>
<keyword id="KW-0413">Isomerase</keyword>
<keyword id="KW-1185">Reference proteome</keyword>
<feature type="chain" id="PRO_1000147688" description="Uronate isomerase">
    <location>
        <begin position="1"/>
        <end position="470"/>
    </location>
</feature>
<organism>
    <name type="scientific">Escherichia coli O127:H6 (strain E2348/69 / EPEC)</name>
    <dbReference type="NCBI Taxonomy" id="574521"/>
    <lineage>
        <taxon>Bacteria</taxon>
        <taxon>Pseudomonadati</taxon>
        <taxon>Pseudomonadota</taxon>
        <taxon>Gammaproteobacteria</taxon>
        <taxon>Enterobacterales</taxon>
        <taxon>Enterobacteriaceae</taxon>
        <taxon>Escherichia</taxon>
    </lineage>
</organism>
<accession>B7UIZ9</accession>
<protein>
    <recommendedName>
        <fullName evidence="1">Uronate isomerase</fullName>
        <ecNumber evidence="1">5.3.1.12</ecNumber>
    </recommendedName>
    <alternativeName>
        <fullName evidence="1">Glucuronate isomerase</fullName>
    </alternativeName>
    <alternativeName>
        <fullName evidence="1">Uronic isomerase</fullName>
    </alternativeName>
</protein>